<sequence length="136" mass="14300">MTGGGKSGGKASGSKNAQSRSSKAGLAFPVGRVHRLLRKGNYAQRVGAGAPVYLAAVLEYLAAEILELAGNAARDNKKTRIIPRHLQLAIRNDEELNKLLGHVTIAQGGVLPNIHQNLLPKKTGKTAGGKNASQEM</sequence>
<feature type="initiator methionine" description="Removed" evidence="1">
    <location>
        <position position="1"/>
    </location>
</feature>
<feature type="chain" id="PRO_0000228732" description="Histone H2A">
    <location>
        <begin position="2"/>
        <end position="136"/>
    </location>
</feature>
<feature type="region of interest" description="Disordered" evidence="2">
    <location>
        <begin position="1"/>
        <end position="24"/>
    </location>
</feature>
<feature type="short sequence motif" description="[ST]-Q motif">
    <location>
        <begin position="133"/>
        <end position="134"/>
    </location>
</feature>
<feature type="compositionally biased region" description="Gly residues" evidence="2">
    <location>
        <begin position="1"/>
        <end position="11"/>
    </location>
</feature>
<feature type="site" description="Not ubiquitinated" evidence="3">
    <location>
        <position position="121"/>
    </location>
</feature>
<feature type="modified residue" description="N6-acetyllysine" evidence="1">
    <location>
        <position position="6"/>
    </location>
</feature>
<feature type="modified residue" description="N6-acetyllysine" evidence="1">
    <location>
        <position position="10"/>
    </location>
</feature>
<feature type="modified residue" description="N5-methylglutamine" evidence="1">
    <location>
        <position position="107"/>
    </location>
</feature>
<feature type="modified residue" description="Phosphoserine" evidence="1">
    <location>
        <position position="133"/>
    </location>
</feature>
<gene>
    <name type="primary">HTA1</name>
    <name type="ORF">MGG_03577</name>
</gene>
<reference key="1">
    <citation type="journal article" date="2005" name="Nature">
        <title>The genome sequence of the rice blast fungus Magnaporthe grisea.</title>
        <authorList>
            <person name="Dean R.A."/>
            <person name="Talbot N.J."/>
            <person name="Ebbole D.J."/>
            <person name="Farman M.L."/>
            <person name="Mitchell T.K."/>
            <person name="Orbach M.J."/>
            <person name="Thon M.R."/>
            <person name="Kulkarni R."/>
            <person name="Xu J.-R."/>
            <person name="Pan H."/>
            <person name="Read N.D."/>
            <person name="Lee Y.-H."/>
            <person name="Carbone I."/>
            <person name="Brown D."/>
            <person name="Oh Y.Y."/>
            <person name="Donofrio N."/>
            <person name="Jeong J.S."/>
            <person name="Soanes D.M."/>
            <person name="Djonovic S."/>
            <person name="Kolomiets E."/>
            <person name="Rehmeyer C."/>
            <person name="Li W."/>
            <person name="Harding M."/>
            <person name="Kim S."/>
            <person name="Lebrun M.-H."/>
            <person name="Bohnert H."/>
            <person name="Coughlan S."/>
            <person name="Butler J."/>
            <person name="Calvo S.E."/>
            <person name="Ma L.-J."/>
            <person name="Nicol R."/>
            <person name="Purcell S."/>
            <person name="Nusbaum C."/>
            <person name="Galagan J.E."/>
            <person name="Birren B.W."/>
        </authorList>
    </citation>
    <scope>NUCLEOTIDE SEQUENCE [LARGE SCALE GENOMIC DNA]</scope>
    <source>
        <strain>70-15 / ATCC MYA-4617 / FGSC 8958</strain>
    </source>
</reference>
<organism>
    <name type="scientific">Pyricularia oryzae (strain 70-15 / ATCC MYA-4617 / FGSC 8958)</name>
    <name type="common">Rice blast fungus</name>
    <name type="synonym">Magnaporthe oryzae</name>
    <dbReference type="NCBI Taxonomy" id="242507"/>
    <lineage>
        <taxon>Eukaryota</taxon>
        <taxon>Fungi</taxon>
        <taxon>Dikarya</taxon>
        <taxon>Ascomycota</taxon>
        <taxon>Pezizomycotina</taxon>
        <taxon>Sordariomycetes</taxon>
        <taxon>Sordariomycetidae</taxon>
        <taxon>Magnaporthales</taxon>
        <taxon>Pyriculariaceae</taxon>
        <taxon>Pyricularia</taxon>
    </lineage>
</organism>
<evidence type="ECO:0000250" key="1"/>
<evidence type="ECO:0000256" key="2">
    <source>
        <dbReference type="SAM" id="MobiDB-lite"/>
    </source>
</evidence>
<evidence type="ECO:0000305" key="3"/>
<keyword id="KW-0007">Acetylation</keyword>
<keyword id="KW-0158">Chromosome</keyword>
<keyword id="KW-0227">DNA damage</keyword>
<keyword id="KW-0234">DNA repair</keyword>
<keyword id="KW-0238">DNA-binding</keyword>
<keyword id="KW-0488">Methylation</keyword>
<keyword id="KW-0544">Nucleosome core</keyword>
<keyword id="KW-0539">Nucleus</keyword>
<keyword id="KW-0597">Phosphoprotein</keyword>
<keyword id="KW-1185">Reference proteome</keyword>
<dbReference type="EMBL" id="CM001234">
    <property type="protein sequence ID" value="EHA50014.1"/>
    <property type="molecule type" value="Genomic_DNA"/>
</dbReference>
<dbReference type="RefSeq" id="XP_003716333.1">
    <property type="nucleotide sequence ID" value="XM_003716285.1"/>
</dbReference>
<dbReference type="SMR" id="P0CT12"/>
<dbReference type="FunCoup" id="P0CT12">
    <property type="interactions" value="957"/>
</dbReference>
<dbReference type="STRING" id="242507.P0CT12"/>
<dbReference type="EnsemblFungi" id="MGG_03577T0">
    <property type="protein sequence ID" value="MGG_03577T0"/>
    <property type="gene ID" value="MGG_03577"/>
</dbReference>
<dbReference type="GeneID" id="2676728"/>
<dbReference type="KEGG" id="mgr:MGG_03577"/>
<dbReference type="VEuPathDB" id="FungiDB:MGG_03577"/>
<dbReference type="eggNOG" id="KOG1756">
    <property type="taxonomic scope" value="Eukaryota"/>
</dbReference>
<dbReference type="HOGENOM" id="CLU_062828_3_1_1"/>
<dbReference type="InParanoid" id="P0CT12"/>
<dbReference type="OMA" id="CALESQH"/>
<dbReference type="OrthoDB" id="9421954at2759"/>
<dbReference type="Proteomes" id="UP000009058">
    <property type="component" value="Chromosome 4"/>
</dbReference>
<dbReference type="GO" id="GO:0000786">
    <property type="term" value="C:nucleosome"/>
    <property type="evidence" value="ECO:0007669"/>
    <property type="project" value="UniProtKB-KW"/>
</dbReference>
<dbReference type="GO" id="GO:0005634">
    <property type="term" value="C:nucleus"/>
    <property type="evidence" value="ECO:0007669"/>
    <property type="project" value="UniProtKB-SubCell"/>
</dbReference>
<dbReference type="GO" id="GO:0003677">
    <property type="term" value="F:DNA binding"/>
    <property type="evidence" value="ECO:0007669"/>
    <property type="project" value="UniProtKB-KW"/>
</dbReference>
<dbReference type="GO" id="GO:0046982">
    <property type="term" value="F:protein heterodimerization activity"/>
    <property type="evidence" value="ECO:0007669"/>
    <property type="project" value="InterPro"/>
</dbReference>
<dbReference type="GO" id="GO:0030527">
    <property type="term" value="F:structural constituent of chromatin"/>
    <property type="evidence" value="ECO:0007669"/>
    <property type="project" value="InterPro"/>
</dbReference>
<dbReference type="GO" id="GO:0006281">
    <property type="term" value="P:DNA repair"/>
    <property type="evidence" value="ECO:0007669"/>
    <property type="project" value="UniProtKB-KW"/>
</dbReference>
<dbReference type="CDD" id="cd00074">
    <property type="entry name" value="HFD_H2A"/>
    <property type="match status" value="1"/>
</dbReference>
<dbReference type="FunFam" id="1.10.20.10:FF:000008">
    <property type="entry name" value="Histone H2A"/>
    <property type="match status" value="1"/>
</dbReference>
<dbReference type="Gene3D" id="1.10.20.10">
    <property type="entry name" value="Histone, subunit A"/>
    <property type="match status" value="1"/>
</dbReference>
<dbReference type="InterPro" id="IPR009072">
    <property type="entry name" value="Histone-fold"/>
</dbReference>
<dbReference type="InterPro" id="IPR002119">
    <property type="entry name" value="Histone_H2A"/>
</dbReference>
<dbReference type="InterPro" id="IPR007125">
    <property type="entry name" value="Histone_H2A/H2B/H3"/>
</dbReference>
<dbReference type="InterPro" id="IPR032454">
    <property type="entry name" value="Histone_H2A_C"/>
</dbReference>
<dbReference type="InterPro" id="IPR032458">
    <property type="entry name" value="Histone_H2A_CS"/>
</dbReference>
<dbReference type="PANTHER" id="PTHR23430">
    <property type="entry name" value="HISTONE H2A"/>
    <property type="match status" value="1"/>
</dbReference>
<dbReference type="Pfam" id="PF00125">
    <property type="entry name" value="Histone"/>
    <property type="match status" value="1"/>
</dbReference>
<dbReference type="Pfam" id="PF16211">
    <property type="entry name" value="Histone_H2A_C"/>
    <property type="match status" value="1"/>
</dbReference>
<dbReference type="PRINTS" id="PR00620">
    <property type="entry name" value="HISTONEH2A"/>
</dbReference>
<dbReference type="SMART" id="SM00414">
    <property type="entry name" value="H2A"/>
    <property type="match status" value="1"/>
</dbReference>
<dbReference type="SUPFAM" id="SSF47113">
    <property type="entry name" value="Histone-fold"/>
    <property type="match status" value="1"/>
</dbReference>
<dbReference type="PROSITE" id="PS00046">
    <property type="entry name" value="HISTONE_H2A"/>
    <property type="match status" value="1"/>
</dbReference>
<accession>P0CT12</accession>
<accession>A4QRI0</accession>
<accession>G4N7F5</accession>
<accession>Q5G578</accession>
<name>H2A_PYRO7</name>
<comment type="function">
    <text>Core component of nucleosome which plays a central role in DNA double strand break (DSB) repair. Nucleosomes wrap and compact DNA into chromatin, limiting DNA accessibility to the cellular machineries which require DNA as a template. Histones thereby play a central role in transcription regulation, DNA repair, DNA replication and chromosomal stability. DNA accessibility is regulated via a complex set of post-translational modifications of histones, also called histone code, and nucleosome remodeling.</text>
</comment>
<comment type="subunit">
    <text>The nucleosome is a histone octamer containing two molecules each of H2A, H2B, H3 and H4 assembled in one H3-H4 heterotetramer and two H2A-H2B heterodimers. The octamer wraps approximately 147 bp of DNA.</text>
</comment>
<comment type="subcellular location">
    <subcellularLocation>
        <location evidence="1">Nucleus</location>
    </subcellularLocation>
    <subcellularLocation>
        <location evidence="1">Chromosome</location>
    </subcellularLocation>
</comment>
<comment type="domain">
    <text>The [ST]-Q motif constitutes a recognition sequence for kinases from the PI3/PI4-kinase family.</text>
</comment>
<comment type="PTM">
    <text evidence="1">Phosphorylated to form H2AS128ph (gamma-H2A) in response to DNA double-strand breaks (DSBs) generated by exogenous genotoxic agents and by stalled replication forks. Phosphorylation is dependent on the DNA damage checkpoint kinases MEC1/ATR and TEL1/ATM, spreads on either side of a detected DSB site and may mark the surrounding chromatin for recruitment of proteins required for DNA damage signaling and repair. Gamma-H2A is removed from the DNA prior to the strand invasion-primer extension step of the repair process and subsequently dephosphorylated. Dephosphorylation is necessary for efficient recovery from the DNA damage checkpoint (By similarity).</text>
</comment>
<comment type="PTM">
    <text evidence="1">Acetylated by ESA1 to form H2AK4ac and H2AK7ac.</text>
</comment>
<comment type="miscellaneous">
    <text evidence="3">In contrast to vertebrates and insects, its C-terminus is not monoubiquitinated.</text>
</comment>
<comment type="similarity">
    <text evidence="3">Belongs to the histone H2A family.</text>
</comment>
<comment type="caution">
    <text evidence="3">To ensure consistency between histone entries, we follow the 'Brno' nomenclature for histone modifications, with positions referring to those used in the literature for the 'closest' model organism. Due to slight variations in histone sequences between organisms and to the presence of initiator methionine in UniProtKB/Swiss-Prot sequences, the actual positions of modified amino acids in the sequence generally differ. In this entry the following conventions are used: H2AK4ac = acetylated Lys-6; H2AK7ac = acetylated Lys-10; H2AS128ph = phosphorylated Ser-133.</text>
</comment>
<proteinExistence type="inferred from homology"/>
<protein>
    <recommendedName>
        <fullName>Histone H2A</fullName>
    </recommendedName>
</protein>